<evidence type="ECO:0000255" key="1">
    <source>
        <dbReference type="HAMAP-Rule" id="MF_00658"/>
    </source>
</evidence>
<reference key="1">
    <citation type="journal article" date="2008" name="PLoS ONE">
        <title>A recalibrated molecular clock and independent origins for the cholera pandemic clones.</title>
        <authorList>
            <person name="Feng L."/>
            <person name="Reeves P.R."/>
            <person name="Lan R."/>
            <person name="Ren Y."/>
            <person name="Gao C."/>
            <person name="Zhou Z."/>
            <person name="Ren Y."/>
            <person name="Cheng J."/>
            <person name="Wang W."/>
            <person name="Wang J."/>
            <person name="Qian W."/>
            <person name="Li D."/>
            <person name="Wang L."/>
        </authorList>
    </citation>
    <scope>NUCLEOTIDE SEQUENCE [LARGE SCALE GENOMIC DNA]</scope>
    <source>
        <strain>M66-2</strain>
    </source>
</reference>
<accession>C3LTJ9</accession>
<comment type="function">
    <text evidence="1">Specifically methylates the pseudouridine at position 1915 (m3Psi1915) in 23S rRNA.</text>
</comment>
<comment type="catalytic activity">
    <reaction evidence="1">
        <text>pseudouridine(1915) in 23S rRNA + S-adenosyl-L-methionine = N(3)-methylpseudouridine(1915) in 23S rRNA + S-adenosyl-L-homocysteine + H(+)</text>
        <dbReference type="Rhea" id="RHEA:42752"/>
        <dbReference type="Rhea" id="RHEA-COMP:10221"/>
        <dbReference type="Rhea" id="RHEA-COMP:10222"/>
        <dbReference type="ChEBI" id="CHEBI:15378"/>
        <dbReference type="ChEBI" id="CHEBI:57856"/>
        <dbReference type="ChEBI" id="CHEBI:59789"/>
        <dbReference type="ChEBI" id="CHEBI:65314"/>
        <dbReference type="ChEBI" id="CHEBI:74486"/>
        <dbReference type="EC" id="2.1.1.177"/>
    </reaction>
</comment>
<comment type="subunit">
    <text evidence="1">Homodimer.</text>
</comment>
<comment type="subcellular location">
    <subcellularLocation>
        <location evidence="1">Cytoplasm</location>
    </subcellularLocation>
</comment>
<comment type="similarity">
    <text evidence="1">Belongs to the RNA methyltransferase RlmH family.</text>
</comment>
<protein>
    <recommendedName>
        <fullName evidence="1">Ribosomal RNA large subunit methyltransferase H</fullName>
        <ecNumber evidence="1">2.1.1.177</ecNumber>
    </recommendedName>
    <alternativeName>
        <fullName evidence="1">23S rRNA (pseudouridine1915-N3)-methyltransferase</fullName>
    </alternativeName>
    <alternativeName>
        <fullName evidence="1">23S rRNA m3Psi1915 methyltransferase</fullName>
    </alternativeName>
    <alternativeName>
        <fullName evidence="1">rRNA (pseudouridine-N3-)-methyltransferase RlmH</fullName>
    </alternativeName>
</protein>
<feature type="chain" id="PRO_1000199838" description="Ribosomal RNA large subunit methyltransferase H">
    <location>
        <begin position="1"/>
        <end position="156"/>
    </location>
</feature>
<feature type="binding site" evidence="1">
    <location>
        <position position="73"/>
    </location>
    <ligand>
        <name>S-adenosyl-L-methionine</name>
        <dbReference type="ChEBI" id="CHEBI:59789"/>
    </ligand>
</feature>
<feature type="binding site" evidence="1">
    <location>
        <position position="104"/>
    </location>
    <ligand>
        <name>S-adenosyl-L-methionine</name>
        <dbReference type="ChEBI" id="CHEBI:59789"/>
    </ligand>
</feature>
<feature type="binding site" evidence="1">
    <location>
        <begin position="123"/>
        <end position="128"/>
    </location>
    <ligand>
        <name>S-adenosyl-L-methionine</name>
        <dbReference type="ChEBI" id="CHEBI:59789"/>
    </ligand>
</feature>
<name>RLMH_VIBCM</name>
<gene>
    <name evidence="1" type="primary">rlmH</name>
    <name type="ordered locus">VCM66_0907</name>
</gene>
<organism>
    <name type="scientific">Vibrio cholerae serotype O1 (strain M66-2)</name>
    <dbReference type="NCBI Taxonomy" id="579112"/>
    <lineage>
        <taxon>Bacteria</taxon>
        <taxon>Pseudomonadati</taxon>
        <taxon>Pseudomonadota</taxon>
        <taxon>Gammaproteobacteria</taxon>
        <taxon>Vibrionales</taxon>
        <taxon>Vibrionaceae</taxon>
        <taxon>Vibrio</taxon>
    </lineage>
</organism>
<sequence length="156" mass="17520">MKIQLIAVGTKMPKWVEEGFQEYRRRFPHDMPLELVEITAGKRGKNADIARILQKEGEAMLAAVPKGNRIVTLDIPGKRWDTEELAVQLESWKLDGRDVSILIGGPEGLAPACKAAADQSWSLSPLTLPHPLVRVVMAESLYRAWSITTNHPYHRE</sequence>
<dbReference type="EC" id="2.1.1.177" evidence="1"/>
<dbReference type="EMBL" id="CP001233">
    <property type="protein sequence ID" value="ACP05225.1"/>
    <property type="molecule type" value="Genomic_DNA"/>
</dbReference>
<dbReference type="RefSeq" id="WP_000701620.1">
    <property type="nucleotide sequence ID" value="NC_012578.1"/>
</dbReference>
<dbReference type="SMR" id="C3LTJ9"/>
<dbReference type="GeneID" id="93951526"/>
<dbReference type="KEGG" id="vcm:VCM66_0907"/>
<dbReference type="HOGENOM" id="CLU_100552_1_0_6"/>
<dbReference type="Proteomes" id="UP000001217">
    <property type="component" value="Chromosome I"/>
</dbReference>
<dbReference type="GO" id="GO:0005737">
    <property type="term" value="C:cytoplasm"/>
    <property type="evidence" value="ECO:0007669"/>
    <property type="project" value="UniProtKB-SubCell"/>
</dbReference>
<dbReference type="GO" id="GO:0070038">
    <property type="term" value="F:rRNA (pseudouridine-N3-)-methyltransferase activity"/>
    <property type="evidence" value="ECO:0007669"/>
    <property type="project" value="UniProtKB-UniRule"/>
</dbReference>
<dbReference type="CDD" id="cd18081">
    <property type="entry name" value="RlmH-like"/>
    <property type="match status" value="1"/>
</dbReference>
<dbReference type="Gene3D" id="3.40.1280.10">
    <property type="match status" value="1"/>
</dbReference>
<dbReference type="HAMAP" id="MF_00658">
    <property type="entry name" value="23SrRNA_methyltr_H"/>
    <property type="match status" value="1"/>
</dbReference>
<dbReference type="InterPro" id="IPR029028">
    <property type="entry name" value="Alpha/beta_knot_MTases"/>
</dbReference>
<dbReference type="InterPro" id="IPR003742">
    <property type="entry name" value="RlmH-like"/>
</dbReference>
<dbReference type="InterPro" id="IPR029026">
    <property type="entry name" value="tRNA_m1G_MTases_N"/>
</dbReference>
<dbReference type="NCBIfam" id="NF000984">
    <property type="entry name" value="PRK00103.1-1"/>
    <property type="match status" value="1"/>
</dbReference>
<dbReference type="NCBIfam" id="NF000986">
    <property type="entry name" value="PRK00103.1-4"/>
    <property type="match status" value="1"/>
</dbReference>
<dbReference type="NCBIfam" id="TIGR00246">
    <property type="entry name" value="tRNA_RlmH_YbeA"/>
    <property type="match status" value="1"/>
</dbReference>
<dbReference type="PANTHER" id="PTHR33603">
    <property type="entry name" value="METHYLTRANSFERASE"/>
    <property type="match status" value="1"/>
</dbReference>
<dbReference type="PANTHER" id="PTHR33603:SF1">
    <property type="entry name" value="RIBOSOMAL RNA LARGE SUBUNIT METHYLTRANSFERASE H"/>
    <property type="match status" value="1"/>
</dbReference>
<dbReference type="Pfam" id="PF02590">
    <property type="entry name" value="SPOUT_MTase"/>
    <property type="match status" value="1"/>
</dbReference>
<dbReference type="PIRSF" id="PIRSF004505">
    <property type="entry name" value="MT_bac"/>
    <property type="match status" value="1"/>
</dbReference>
<dbReference type="SUPFAM" id="SSF75217">
    <property type="entry name" value="alpha/beta knot"/>
    <property type="match status" value="1"/>
</dbReference>
<keyword id="KW-0963">Cytoplasm</keyword>
<keyword id="KW-0489">Methyltransferase</keyword>
<keyword id="KW-0698">rRNA processing</keyword>
<keyword id="KW-0949">S-adenosyl-L-methionine</keyword>
<keyword id="KW-0808">Transferase</keyword>
<proteinExistence type="inferred from homology"/>